<proteinExistence type="evidence at transcript level"/>
<dbReference type="EC" id="2.1.1.85" evidence="1"/>
<dbReference type="EMBL" id="BC055261">
    <property type="protein sequence ID" value="AAH55261.1"/>
    <property type="molecule type" value="mRNA"/>
</dbReference>
<dbReference type="EMBL" id="BC155278">
    <property type="protein sequence ID" value="AAI55279.1"/>
    <property type="molecule type" value="mRNA"/>
</dbReference>
<dbReference type="RefSeq" id="NP_956348.1">
    <property type="nucleotide sequence ID" value="NM_200054.1"/>
</dbReference>
<dbReference type="SMR" id="Q7SXS7"/>
<dbReference type="BioGRID" id="87213">
    <property type="interactions" value="1"/>
</dbReference>
<dbReference type="FunCoup" id="Q7SXS7">
    <property type="interactions" value="937"/>
</dbReference>
<dbReference type="STRING" id="7955.ENSDARP00000005500"/>
<dbReference type="PaxDb" id="7955-ENSDARP00000110046"/>
<dbReference type="GeneID" id="337193"/>
<dbReference type="KEGG" id="dre:337193"/>
<dbReference type="AGR" id="ZFIN:ZDB-GENE-030131-9137"/>
<dbReference type="CTD" id="84193"/>
<dbReference type="ZFIN" id="ZDB-GENE-030131-9137">
    <property type="gene designation" value="setd3"/>
</dbReference>
<dbReference type="eggNOG" id="KOG1337">
    <property type="taxonomic scope" value="Eukaryota"/>
</dbReference>
<dbReference type="InParanoid" id="Q7SXS7"/>
<dbReference type="OrthoDB" id="441812at2759"/>
<dbReference type="PhylomeDB" id="Q7SXS7"/>
<dbReference type="BRENDA" id="2.1.1.359">
    <property type="organism ID" value="928"/>
</dbReference>
<dbReference type="PRO" id="PR:Q7SXS7"/>
<dbReference type="Proteomes" id="UP000000437">
    <property type="component" value="Chromosome 17"/>
</dbReference>
<dbReference type="GO" id="GO:0005737">
    <property type="term" value="C:cytoplasm"/>
    <property type="evidence" value="ECO:0000250"/>
    <property type="project" value="UniProtKB"/>
</dbReference>
<dbReference type="GO" id="GO:0003779">
    <property type="term" value="F:actin binding"/>
    <property type="evidence" value="ECO:0007669"/>
    <property type="project" value="UniProtKB-KW"/>
</dbReference>
<dbReference type="GO" id="GO:0046975">
    <property type="term" value="F:histone H3K36 methyltransferase activity"/>
    <property type="evidence" value="ECO:0000314"/>
    <property type="project" value="UniProtKB"/>
</dbReference>
<dbReference type="GO" id="GO:0042800">
    <property type="term" value="F:histone H3K4 methyltransferase activity"/>
    <property type="evidence" value="ECO:0000318"/>
    <property type="project" value="GO_Central"/>
</dbReference>
<dbReference type="GO" id="GO:0018064">
    <property type="term" value="F:protein-L-histidine N-tele-methyltransferase activity"/>
    <property type="evidence" value="ECO:0000250"/>
    <property type="project" value="UniProtKB"/>
</dbReference>
<dbReference type="GO" id="GO:0003713">
    <property type="term" value="F:transcription coactivator activity"/>
    <property type="evidence" value="ECO:0000314"/>
    <property type="project" value="UniProtKB"/>
</dbReference>
<dbReference type="GO" id="GO:0030047">
    <property type="term" value="P:actin modification"/>
    <property type="evidence" value="ECO:0000250"/>
    <property type="project" value="UniProtKB"/>
</dbReference>
<dbReference type="GO" id="GO:0008283">
    <property type="term" value="P:cell population proliferation"/>
    <property type="evidence" value="ECO:0000304"/>
    <property type="project" value="UniProtKB"/>
</dbReference>
<dbReference type="GO" id="GO:0018021">
    <property type="term" value="P:peptidyl-histidine methylation"/>
    <property type="evidence" value="ECO:0000250"/>
    <property type="project" value="UniProtKB"/>
</dbReference>
<dbReference type="GO" id="GO:0045893">
    <property type="term" value="P:positive regulation of DNA-templated transcription"/>
    <property type="evidence" value="ECO:0000314"/>
    <property type="project" value="UniProtKB"/>
</dbReference>
<dbReference type="GO" id="GO:0045944">
    <property type="term" value="P:positive regulation of transcription by RNA polymerase II"/>
    <property type="evidence" value="ECO:0000318"/>
    <property type="project" value="GO_Central"/>
</dbReference>
<dbReference type="GO" id="GO:0001558">
    <property type="term" value="P:regulation of cell growth"/>
    <property type="evidence" value="ECO:0000304"/>
    <property type="project" value="UniProtKB"/>
</dbReference>
<dbReference type="GO" id="GO:0070472">
    <property type="term" value="P:regulation of uterine smooth muscle contraction"/>
    <property type="evidence" value="ECO:0000318"/>
    <property type="project" value="GO_Central"/>
</dbReference>
<dbReference type="CDD" id="cd19176">
    <property type="entry name" value="SET_SETD3"/>
    <property type="match status" value="1"/>
</dbReference>
<dbReference type="FunFam" id="3.90.1410.10:FF:000001">
    <property type="entry name" value="histone-lysine N-methyltransferase setd3 isoform X1"/>
    <property type="match status" value="1"/>
</dbReference>
<dbReference type="FunFam" id="3.90.1420.10:FF:000001">
    <property type="entry name" value="histone-lysine N-methyltransferase setd3 isoform X1"/>
    <property type="match status" value="1"/>
</dbReference>
<dbReference type="Gene3D" id="3.90.1420.10">
    <property type="entry name" value="Rubisco LSMT, substrate-binding domain"/>
    <property type="match status" value="1"/>
</dbReference>
<dbReference type="Gene3D" id="3.90.1410.10">
    <property type="entry name" value="set domain protein methyltransferase, domain 1"/>
    <property type="match status" value="1"/>
</dbReference>
<dbReference type="InterPro" id="IPR015353">
    <property type="entry name" value="Rubisco_LSMT_subst-bd"/>
</dbReference>
<dbReference type="InterPro" id="IPR036464">
    <property type="entry name" value="Rubisco_LSMT_subst-bd_sf"/>
</dbReference>
<dbReference type="InterPro" id="IPR001214">
    <property type="entry name" value="SET_dom"/>
</dbReference>
<dbReference type="InterPro" id="IPR046341">
    <property type="entry name" value="SET_dom_sf"/>
</dbReference>
<dbReference type="InterPro" id="IPR025785">
    <property type="entry name" value="SETD3"/>
</dbReference>
<dbReference type="InterPro" id="IPR044428">
    <property type="entry name" value="SETD3_SET"/>
</dbReference>
<dbReference type="InterPro" id="IPR050600">
    <property type="entry name" value="SETD3_SETD6_MTase"/>
</dbReference>
<dbReference type="PANTHER" id="PTHR13271:SF47">
    <property type="entry name" value="ACTIN-HISTIDINE N-METHYLTRANSFERASE"/>
    <property type="match status" value="1"/>
</dbReference>
<dbReference type="PANTHER" id="PTHR13271">
    <property type="entry name" value="UNCHARACTERIZED PUTATIVE METHYLTRANSFERASE"/>
    <property type="match status" value="1"/>
</dbReference>
<dbReference type="Pfam" id="PF09273">
    <property type="entry name" value="Rubis-subs-bind"/>
    <property type="match status" value="1"/>
</dbReference>
<dbReference type="Pfam" id="PF00856">
    <property type="entry name" value="SET"/>
    <property type="match status" value="1"/>
</dbReference>
<dbReference type="SUPFAM" id="SSF81822">
    <property type="entry name" value="RuBisCo LSMT C-terminal, substrate-binding domain"/>
    <property type="match status" value="1"/>
</dbReference>
<dbReference type="SUPFAM" id="SSF82199">
    <property type="entry name" value="SET domain"/>
    <property type="match status" value="1"/>
</dbReference>
<dbReference type="PROSITE" id="PS51565">
    <property type="entry name" value="SAM_MT85_SETD3"/>
    <property type="match status" value="1"/>
</dbReference>
<dbReference type="PROSITE" id="PS50280">
    <property type="entry name" value="SET"/>
    <property type="match status" value="1"/>
</dbReference>
<feature type="chain" id="PRO_0000408343" description="Actin-histidine N-methyltransferase">
    <location>
        <begin position="1"/>
        <end position="596"/>
    </location>
</feature>
<feature type="domain" description="SET" evidence="2">
    <location>
        <begin position="94"/>
        <end position="314"/>
    </location>
</feature>
<feature type="region of interest" description="Disordered" evidence="4">
    <location>
        <begin position="556"/>
        <end position="596"/>
    </location>
</feature>
<feature type="compositionally biased region" description="Basic and acidic residues" evidence="4">
    <location>
        <begin position="575"/>
        <end position="596"/>
    </location>
</feature>
<feature type="binding site" evidence="1">
    <location>
        <position position="75"/>
    </location>
    <ligand>
        <name>S-adenosyl-L-methionine</name>
        <dbReference type="ChEBI" id="CHEBI:59789"/>
    </ligand>
</feature>
<feature type="binding site" evidence="1">
    <location>
        <begin position="104"/>
        <end position="106"/>
    </location>
    <ligand>
        <name>S-adenosyl-L-methionine</name>
        <dbReference type="ChEBI" id="CHEBI:59789"/>
    </ligand>
</feature>
<feature type="binding site" evidence="1">
    <location>
        <position position="254"/>
    </location>
    <ligand>
        <name>S-adenosyl-L-methionine</name>
        <dbReference type="ChEBI" id="CHEBI:59789"/>
    </ligand>
</feature>
<feature type="binding site" evidence="1">
    <location>
        <begin position="275"/>
        <end position="279"/>
    </location>
    <ligand>
        <name>S-adenosyl-L-methionine</name>
        <dbReference type="ChEBI" id="CHEBI:59789"/>
    </ligand>
</feature>
<feature type="binding site" evidence="1">
    <location>
        <begin position="325"/>
        <end position="327"/>
    </location>
    <ligand>
        <name>S-adenosyl-L-methionine</name>
        <dbReference type="ChEBI" id="CHEBI:59789"/>
    </ligand>
</feature>
<feature type="sequence conflict" description="In Ref. 1; AAI55279." evidence="7" ref="1">
    <original>G</original>
    <variation>S</variation>
    <location>
        <position position="346"/>
    </location>
</feature>
<feature type="sequence conflict" description="In Ref. 1; AAI55279." evidence="7" ref="1">
    <original>A</original>
    <variation>T</variation>
    <location>
        <position position="464"/>
    </location>
</feature>
<feature type="sequence conflict" description="In Ref. 1; AAI55279." evidence="7" ref="1">
    <original>G</original>
    <variation>D</variation>
    <location>
        <position position="595"/>
    </location>
</feature>
<name>SETD3_DANRE</name>
<reference key="1">
    <citation type="submission" date="2003-07" db="EMBL/GenBank/DDBJ databases">
        <authorList>
            <consortium name="NIH - Zebrafish Gene Collection (ZGC) project"/>
        </authorList>
    </citation>
    <scope>NUCLEOTIDE SEQUENCE [LARGE SCALE MRNA]</scope>
    <source>
        <strain>AB</strain>
        <tissue>Embryo</tissue>
    </source>
</reference>
<reference key="2">
    <citation type="journal article" date="2011" name="Biosci. Biotechnol. Biochem.">
        <title>Characterization of a novel histone H3K36 methyltransferase setd3 in zebrafish.</title>
        <authorList>
            <person name="Kim D.W."/>
            <person name="Kim K.B."/>
            <person name="Kim J.Y."/>
            <person name="Seo S.B."/>
        </authorList>
    </citation>
    <scope>CAUTION</scope>
</reference>
<protein>
    <recommendedName>
        <fullName evidence="1">Actin-histidine N-methyltransferase</fullName>
        <ecNumber evidence="1">2.1.1.85</ecNumber>
    </recommendedName>
    <alternativeName>
        <fullName evidence="7">Protein-L-histidine N-tele-methyltransferase</fullName>
    </alternativeName>
    <alternativeName>
        <fullName evidence="7">SET domain-containing protein 3</fullName>
    </alternativeName>
</protein>
<evidence type="ECO:0000250" key="1">
    <source>
        <dbReference type="UniProtKB" id="Q86TU7"/>
    </source>
</evidence>
<evidence type="ECO:0000255" key="2">
    <source>
        <dbReference type="PROSITE-ProRule" id="PRU00190"/>
    </source>
</evidence>
<evidence type="ECO:0000255" key="3">
    <source>
        <dbReference type="PROSITE-ProRule" id="PRU00898"/>
    </source>
</evidence>
<evidence type="ECO:0000256" key="4">
    <source>
        <dbReference type="SAM" id="MobiDB-lite"/>
    </source>
</evidence>
<evidence type="ECO:0000269" key="5">
    <source>
    </source>
</evidence>
<evidence type="ECO:0000303" key="6">
    <source ref="1"/>
</evidence>
<evidence type="ECO:0000305" key="7"/>
<gene>
    <name evidence="1" type="primary">setd3</name>
    <name evidence="6" type="ORF">zgc:63842</name>
</gene>
<accession>Q7SXS7</accession>
<accession>A9JTB8</accession>
<comment type="function">
    <text evidence="1">Protein-histidine N-methyltransferase that specifically mediates 3-methylhistidine (tele-methylhistidine) methylation of actin at 'His-73'. Does not have protein-lysine N-methyltransferase activity and probably only catalyzes histidine methylation of actin.</text>
</comment>
<comment type="catalytic activity">
    <reaction evidence="1">
        <text>L-histidyl-[protein] + S-adenosyl-L-methionine = N(tele)-methyl-L-histidyl-[protein] + S-adenosyl-L-homocysteine + H(+)</text>
        <dbReference type="Rhea" id="RHEA:19369"/>
        <dbReference type="Rhea" id="RHEA-COMP:9745"/>
        <dbReference type="Rhea" id="RHEA-COMP:11600"/>
        <dbReference type="ChEBI" id="CHEBI:15378"/>
        <dbReference type="ChEBI" id="CHEBI:16367"/>
        <dbReference type="ChEBI" id="CHEBI:29979"/>
        <dbReference type="ChEBI" id="CHEBI:57856"/>
        <dbReference type="ChEBI" id="CHEBI:59789"/>
        <dbReference type="EC" id="2.1.1.85"/>
    </reaction>
</comment>
<comment type="subcellular location">
    <subcellularLocation>
        <location evidence="1">Cytoplasm</location>
    </subcellularLocation>
</comment>
<comment type="domain">
    <text evidence="1">The SET domain specifically recognizes and binds actin, suggesting that it does not accommodate substrates diverging from actin.</text>
</comment>
<comment type="similarity">
    <text evidence="3">Belongs to the class V-like SAM-binding methyltransferase superfamily. SETD3 actin-histidine methyltransferase family.</text>
</comment>
<comment type="caution">
    <text evidence="1 5">Was initially reported to have histone methyltransferase activity and methylate 'Lys-36' of histone H3 (H3K36me) (PubMed:21307598). However, this conclusion was based on mass spectrometry data wherin mass shifts were inconsistent with a bona fide methylation event and the histone methyltransferase activity could not be confirmed (By similarity).</text>
</comment>
<organism>
    <name type="scientific">Danio rerio</name>
    <name type="common">Zebrafish</name>
    <name type="synonym">Brachydanio rerio</name>
    <dbReference type="NCBI Taxonomy" id="7955"/>
    <lineage>
        <taxon>Eukaryota</taxon>
        <taxon>Metazoa</taxon>
        <taxon>Chordata</taxon>
        <taxon>Craniata</taxon>
        <taxon>Vertebrata</taxon>
        <taxon>Euteleostomi</taxon>
        <taxon>Actinopterygii</taxon>
        <taxon>Neopterygii</taxon>
        <taxon>Teleostei</taxon>
        <taxon>Ostariophysi</taxon>
        <taxon>Cypriniformes</taxon>
        <taxon>Danionidae</taxon>
        <taxon>Danioninae</taxon>
        <taxon>Danio</taxon>
    </lineage>
</organism>
<keyword id="KW-0009">Actin-binding</keyword>
<keyword id="KW-0963">Cytoplasm</keyword>
<keyword id="KW-0489">Methyltransferase</keyword>
<keyword id="KW-1185">Reference proteome</keyword>
<keyword id="KW-0949">S-adenosyl-L-methionine</keyword>
<keyword id="KW-0808">Transferase</keyword>
<sequence>MGKKSRVKTQKSGTGATAAVSPKEMMNLISELLQKCSSAAPSPGKEWEEYVQIRALVEKIRKKQKGMSVSFEGIREDFFSELMAWAAECRASCDGFEISNFADEGYGLKATKDIKAEELFLWIPRKMLMTVESAKNSVLGPLYSQDRILQAMGNVTLALHLLCERANPSSPWLPYIKTLPSEYDTPLYFEEEEVRHLLATQAIQDVLSQYKNTARQYAYFYKVIHTHPNASKLPLKDAFTFDDYRWAVSSVMTRQNQIPTADGSRVTLALIPLWDMCNHTNGLITTGYNLEDDRCECVALKDYKEGEQIYIFYGTRSNAEFVIHNGFFFEDNAHDRVKIKLGVSKGERLYAMKAEVLARAGIPASSIFALHCSEPPISAQLLAFLRVFCMTEEELRDYLVGDHAINKIFTLGNTEFPVSWENEIKLWTFLETRAALLLKTYKTASEEDRSMLEKPDLSLHSRIAIKLRLAEKEILEHAVSCGRAKRLHFQKQLDEGAPLPLYEESDIALLENADAKLPIILRKLEEEEEEHVEEMNQLTPDAVCMNSSKIPVLNGQCKDLNGTQEDPPGGGAVVKEIEKHDPSAKRTEGEPKDAGK</sequence>